<protein>
    <recommendedName>
        <fullName evidence="1">ATP-dependent RNA helicase RhlB</fullName>
        <ecNumber evidence="1">3.6.4.13</ecNumber>
    </recommendedName>
</protein>
<reference key="1">
    <citation type="journal article" date="1995" name="Science">
        <title>Whole-genome random sequencing and assembly of Haemophilus influenzae Rd.</title>
        <authorList>
            <person name="Fleischmann R.D."/>
            <person name="Adams M.D."/>
            <person name="White O."/>
            <person name="Clayton R.A."/>
            <person name="Kirkness E.F."/>
            <person name="Kerlavage A.R."/>
            <person name="Bult C.J."/>
            <person name="Tomb J.-F."/>
            <person name="Dougherty B.A."/>
            <person name="Merrick J.M."/>
            <person name="McKenney K."/>
            <person name="Sutton G.G."/>
            <person name="FitzHugh W."/>
            <person name="Fields C.A."/>
            <person name="Gocayne J.D."/>
            <person name="Scott J.D."/>
            <person name="Shirley R."/>
            <person name="Liu L.-I."/>
            <person name="Glodek A."/>
            <person name="Kelley J.M."/>
            <person name="Weidman J.F."/>
            <person name="Phillips C.A."/>
            <person name="Spriggs T."/>
            <person name="Hedblom E."/>
            <person name="Cotton M.D."/>
            <person name="Utterback T.R."/>
            <person name="Hanna M.C."/>
            <person name="Nguyen D.T."/>
            <person name="Saudek D.M."/>
            <person name="Brandon R.C."/>
            <person name="Fine L.D."/>
            <person name="Fritchman J.L."/>
            <person name="Fuhrmann J.L."/>
            <person name="Geoghagen N.S.M."/>
            <person name="Gnehm C.L."/>
            <person name="McDonald L.A."/>
            <person name="Small K.V."/>
            <person name="Fraser C.M."/>
            <person name="Smith H.O."/>
            <person name="Venter J.C."/>
        </authorList>
    </citation>
    <scope>NUCLEOTIDE SEQUENCE [LARGE SCALE GENOMIC DNA]</scope>
    <source>
        <strain>ATCC 51907 / DSM 11121 / KW20 / Rd</strain>
    </source>
</reference>
<sequence>MQQDYLSQQRFSALPLHPIVRGALAKKGFDFCTPIQALSLPISLNGRDVAGQAQTGTGKTMAFLTATFHHLLTHQDPNLKYPHPRALILAPTRELAVQISNDAEFLAKASGLKTALAYGGDGYDKQLQAIERGVDILIGTTGRVIDYVKQGVIGLDEIQVVVLDEADRMFDLGFIRDIRYLLRKCPAPQARLTMLFSATLSYKVRELAFEDMNEPEYIEIEPEQKTGHRIKEELFYPSNQDKMALLLTLMEDEWPERCIVFANTKHRCEEIWGYLAADGHRVGLLTGDVAQKKRLSLLKQFTDGDLDILVATDVAARGLHISDVTHVFNYDLPDDREDYVHRIGRTGRAGESGVSISFACEEYAMNLPAIEEYIGHSIPVSQYETEALLELPKPYRLKRAVPPQGHTRHRSYHAK</sequence>
<dbReference type="EC" id="3.6.4.13" evidence="1"/>
<dbReference type="EMBL" id="L42023">
    <property type="protein sequence ID" value="AAC22552.1"/>
    <property type="status" value="ALT_INIT"/>
    <property type="molecule type" value="Genomic_DNA"/>
</dbReference>
<dbReference type="PIR" id="E64100">
    <property type="entry name" value="E64100"/>
</dbReference>
<dbReference type="RefSeq" id="NP_439053.1">
    <property type="nucleotide sequence ID" value="NC_000907.1"/>
</dbReference>
<dbReference type="SMR" id="P44922"/>
<dbReference type="STRING" id="71421.HI_0892"/>
<dbReference type="EnsemblBacteria" id="AAC22552">
    <property type="protein sequence ID" value="AAC22552"/>
    <property type="gene ID" value="HI_0892"/>
</dbReference>
<dbReference type="KEGG" id="hin:HI_0892"/>
<dbReference type="PATRIC" id="fig|71421.8.peg.934"/>
<dbReference type="eggNOG" id="COG0513">
    <property type="taxonomic scope" value="Bacteria"/>
</dbReference>
<dbReference type="HOGENOM" id="CLU_003041_1_3_6"/>
<dbReference type="OrthoDB" id="9805696at2"/>
<dbReference type="PhylomeDB" id="P44922"/>
<dbReference type="Proteomes" id="UP000000579">
    <property type="component" value="Chromosome"/>
</dbReference>
<dbReference type="GO" id="GO:0005829">
    <property type="term" value="C:cytosol"/>
    <property type="evidence" value="ECO:0000318"/>
    <property type="project" value="GO_Central"/>
</dbReference>
<dbReference type="GO" id="GO:0005524">
    <property type="term" value="F:ATP binding"/>
    <property type="evidence" value="ECO:0007669"/>
    <property type="project" value="UniProtKB-UniRule"/>
</dbReference>
<dbReference type="GO" id="GO:0016887">
    <property type="term" value="F:ATP hydrolysis activity"/>
    <property type="evidence" value="ECO:0007669"/>
    <property type="project" value="RHEA"/>
</dbReference>
<dbReference type="GO" id="GO:0003723">
    <property type="term" value="F:RNA binding"/>
    <property type="evidence" value="ECO:0007669"/>
    <property type="project" value="UniProtKB-UniRule"/>
</dbReference>
<dbReference type="GO" id="GO:0003724">
    <property type="term" value="F:RNA helicase activity"/>
    <property type="evidence" value="ECO:0000318"/>
    <property type="project" value="GO_Central"/>
</dbReference>
<dbReference type="GO" id="GO:0006401">
    <property type="term" value="P:RNA catabolic process"/>
    <property type="evidence" value="ECO:0007669"/>
    <property type="project" value="UniProtKB-UniRule"/>
</dbReference>
<dbReference type="CDD" id="cd00268">
    <property type="entry name" value="DEADc"/>
    <property type="match status" value="1"/>
</dbReference>
<dbReference type="CDD" id="cd18787">
    <property type="entry name" value="SF2_C_DEAD"/>
    <property type="match status" value="1"/>
</dbReference>
<dbReference type="FunFam" id="3.40.50.300:FF:000312">
    <property type="entry name" value="ATP-dependent RNA helicase RhlB"/>
    <property type="match status" value="1"/>
</dbReference>
<dbReference type="Gene3D" id="3.40.50.300">
    <property type="entry name" value="P-loop containing nucleotide triphosphate hydrolases"/>
    <property type="match status" value="2"/>
</dbReference>
<dbReference type="HAMAP" id="MF_00661">
    <property type="entry name" value="DEAD_helicase_RhlB"/>
    <property type="match status" value="1"/>
</dbReference>
<dbReference type="InterPro" id="IPR011545">
    <property type="entry name" value="DEAD/DEAH_box_helicase_dom"/>
</dbReference>
<dbReference type="InterPro" id="IPR050079">
    <property type="entry name" value="DEAD_box_RNA_helicase"/>
</dbReference>
<dbReference type="InterPro" id="IPR014001">
    <property type="entry name" value="Helicase_ATP-bd"/>
</dbReference>
<dbReference type="InterPro" id="IPR001650">
    <property type="entry name" value="Helicase_C-like"/>
</dbReference>
<dbReference type="InterPro" id="IPR027417">
    <property type="entry name" value="P-loop_NTPase"/>
</dbReference>
<dbReference type="InterPro" id="IPR000629">
    <property type="entry name" value="RNA-helicase_DEAD-box_CS"/>
</dbReference>
<dbReference type="InterPro" id="IPR023554">
    <property type="entry name" value="RNA_helicase_ATP-dep_RhlB"/>
</dbReference>
<dbReference type="InterPro" id="IPR014014">
    <property type="entry name" value="RNA_helicase_DEAD_Q_motif"/>
</dbReference>
<dbReference type="NCBIfam" id="NF003419">
    <property type="entry name" value="PRK04837.1"/>
    <property type="match status" value="1"/>
</dbReference>
<dbReference type="PANTHER" id="PTHR47959:SF10">
    <property type="entry name" value="ATP-DEPENDENT RNA HELICASE RHLB"/>
    <property type="match status" value="1"/>
</dbReference>
<dbReference type="PANTHER" id="PTHR47959">
    <property type="entry name" value="ATP-DEPENDENT RNA HELICASE RHLE-RELATED"/>
    <property type="match status" value="1"/>
</dbReference>
<dbReference type="Pfam" id="PF00270">
    <property type="entry name" value="DEAD"/>
    <property type="match status" value="1"/>
</dbReference>
<dbReference type="Pfam" id="PF00271">
    <property type="entry name" value="Helicase_C"/>
    <property type="match status" value="1"/>
</dbReference>
<dbReference type="SMART" id="SM00487">
    <property type="entry name" value="DEXDc"/>
    <property type="match status" value="1"/>
</dbReference>
<dbReference type="SMART" id="SM00490">
    <property type="entry name" value="HELICc"/>
    <property type="match status" value="1"/>
</dbReference>
<dbReference type="SUPFAM" id="SSF52540">
    <property type="entry name" value="P-loop containing nucleoside triphosphate hydrolases"/>
    <property type="match status" value="1"/>
</dbReference>
<dbReference type="PROSITE" id="PS00039">
    <property type="entry name" value="DEAD_ATP_HELICASE"/>
    <property type="match status" value="1"/>
</dbReference>
<dbReference type="PROSITE" id="PS51192">
    <property type="entry name" value="HELICASE_ATP_BIND_1"/>
    <property type="match status" value="1"/>
</dbReference>
<dbReference type="PROSITE" id="PS51194">
    <property type="entry name" value="HELICASE_CTER"/>
    <property type="match status" value="1"/>
</dbReference>
<dbReference type="PROSITE" id="PS51195">
    <property type="entry name" value="Q_MOTIF"/>
    <property type="match status" value="1"/>
</dbReference>
<name>RHLB_HAEIN</name>
<organism>
    <name type="scientific">Haemophilus influenzae (strain ATCC 51907 / DSM 11121 / KW20 / Rd)</name>
    <dbReference type="NCBI Taxonomy" id="71421"/>
    <lineage>
        <taxon>Bacteria</taxon>
        <taxon>Pseudomonadati</taxon>
        <taxon>Pseudomonadota</taxon>
        <taxon>Gammaproteobacteria</taxon>
        <taxon>Pasteurellales</taxon>
        <taxon>Pasteurellaceae</taxon>
        <taxon>Haemophilus</taxon>
    </lineage>
</organism>
<feature type="chain" id="PRO_0000200773" description="ATP-dependent RNA helicase RhlB">
    <location>
        <begin position="1"/>
        <end position="415"/>
    </location>
</feature>
<feature type="domain" description="Helicase ATP-binding" evidence="1">
    <location>
        <begin position="40"/>
        <end position="218"/>
    </location>
</feature>
<feature type="domain" description="Helicase C-terminal" evidence="1">
    <location>
        <begin position="241"/>
        <end position="389"/>
    </location>
</feature>
<feature type="short sequence motif" description="Q motif">
    <location>
        <begin position="9"/>
        <end position="37"/>
    </location>
</feature>
<feature type="short sequence motif" description="DEAD box">
    <location>
        <begin position="164"/>
        <end position="167"/>
    </location>
</feature>
<feature type="binding site" evidence="1">
    <location>
        <begin position="53"/>
        <end position="60"/>
    </location>
    <ligand>
        <name>ATP</name>
        <dbReference type="ChEBI" id="CHEBI:30616"/>
    </ligand>
</feature>
<accession>P44922</accession>
<proteinExistence type="inferred from homology"/>
<evidence type="ECO:0000255" key="1">
    <source>
        <dbReference type="HAMAP-Rule" id="MF_00661"/>
    </source>
</evidence>
<evidence type="ECO:0000305" key="2"/>
<comment type="function">
    <text evidence="1">DEAD-box RNA helicase involved in RNA degradation. Has RNA-dependent ATPase activity and unwinds double-stranded RNA.</text>
</comment>
<comment type="catalytic activity">
    <reaction evidence="1">
        <text>ATP + H2O = ADP + phosphate + H(+)</text>
        <dbReference type="Rhea" id="RHEA:13065"/>
        <dbReference type="ChEBI" id="CHEBI:15377"/>
        <dbReference type="ChEBI" id="CHEBI:15378"/>
        <dbReference type="ChEBI" id="CHEBI:30616"/>
        <dbReference type="ChEBI" id="CHEBI:43474"/>
        <dbReference type="ChEBI" id="CHEBI:456216"/>
        <dbReference type="EC" id="3.6.4.13"/>
    </reaction>
</comment>
<comment type="subunit">
    <text evidence="1">Component of the RNA degradosome, which is a multiprotein complex involved in RNA processing and mRNA degradation.</text>
</comment>
<comment type="subcellular location">
    <subcellularLocation>
        <location evidence="1">Cytoplasm</location>
    </subcellularLocation>
</comment>
<comment type="similarity">
    <text evidence="1">Belongs to the DEAD box helicase family. RhlB subfamily.</text>
</comment>
<comment type="sequence caution" evidence="2">
    <conflict type="erroneous initiation">
        <sequence resource="EMBL-CDS" id="AAC22552"/>
    </conflict>
</comment>
<keyword id="KW-0067">ATP-binding</keyword>
<keyword id="KW-0963">Cytoplasm</keyword>
<keyword id="KW-0347">Helicase</keyword>
<keyword id="KW-0378">Hydrolase</keyword>
<keyword id="KW-0547">Nucleotide-binding</keyword>
<keyword id="KW-1185">Reference proteome</keyword>
<keyword id="KW-0694">RNA-binding</keyword>
<gene>
    <name evidence="1" type="primary">rhlB</name>
    <name type="ordered locus">HI_0892</name>
</gene>